<sequence>MKRYLITGGTGMVGSHLVNEIKQTDAHITILTRQDKTSNHPKITYINWSKEGWQHQVPDIDIVINLAGATLNKRWTSSHKQAMMLSRIQSTQTLFELFETREHKPEVLFNASAMGYYPPDLFTSYTELYRTLPFDFLSEIVYQWERFANKFKQFGTRVVLGRFGLILSDDGGALEMMELPYRLYVGGKLGSGRQWYSWIHIDDLIRGILFTINHDNAEGPFNLTAPIPERQNLFGYTLARAMHKPHETWAPKLILRAVLGQMSTVILDTQKVLPNKLHALGFEFKYNNLRNALDDLIKA</sequence>
<protein>
    <recommendedName>
        <fullName>Epimerase family protein SERP0438</fullName>
    </recommendedName>
</protein>
<evidence type="ECO:0000305" key="1"/>
<accession>Q5HQV8</accession>
<comment type="similarity">
    <text evidence="1">Belongs to the NAD(P)-dependent epimerase/dehydratase family. SDR39U1 subfamily.</text>
</comment>
<keyword id="KW-1185">Reference proteome</keyword>
<gene>
    <name type="ordered locus">SERP0438</name>
</gene>
<proteinExistence type="inferred from homology"/>
<organism>
    <name type="scientific">Staphylococcus epidermidis (strain ATCC 35984 / DSM 28319 / BCRC 17069 / CCUG 31568 / BM 3577 / RP62A)</name>
    <dbReference type="NCBI Taxonomy" id="176279"/>
    <lineage>
        <taxon>Bacteria</taxon>
        <taxon>Bacillati</taxon>
        <taxon>Bacillota</taxon>
        <taxon>Bacilli</taxon>
        <taxon>Bacillales</taxon>
        <taxon>Staphylococcaceae</taxon>
        <taxon>Staphylococcus</taxon>
    </lineage>
</organism>
<name>Y438_STAEQ</name>
<feature type="chain" id="PRO_0000274157" description="Epimerase family protein SERP0438">
    <location>
        <begin position="1"/>
        <end position="299"/>
    </location>
</feature>
<dbReference type="EMBL" id="CP000029">
    <property type="protein sequence ID" value="AAW53869.1"/>
    <property type="molecule type" value="Genomic_DNA"/>
</dbReference>
<dbReference type="RefSeq" id="WP_001829630.1">
    <property type="nucleotide sequence ID" value="NC_002976.3"/>
</dbReference>
<dbReference type="SMR" id="Q5HQV8"/>
<dbReference type="STRING" id="176279.SERP0438"/>
<dbReference type="KEGG" id="ser:SERP0438"/>
<dbReference type="eggNOG" id="COG1090">
    <property type="taxonomic scope" value="Bacteria"/>
</dbReference>
<dbReference type="HOGENOM" id="CLU_047373_0_3_9"/>
<dbReference type="Proteomes" id="UP000000531">
    <property type="component" value="Chromosome"/>
</dbReference>
<dbReference type="Gene3D" id="3.40.50.720">
    <property type="entry name" value="NAD(P)-binding Rossmann-like Domain"/>
    <property type="match status" value="1"/>
</dbReference>
<dbReference type="InterPro" id="IPR013549">
    <property type="entry name" value="DUF1731"/>
</dbReference>
<dbReference type="InterPro" id="IPR001509">
    <property type="entry name" value="Epimerase_deHydtase"/>
</dbReference>
<dbReference type="InterPro" id="IPR036291">
    <property type="entry name" value="NAD(P)-bd_dom_sf"/>
</dbReference>
<dbReference type="InterPro" id="IPR010099">
    <property type="entry name" value="SDR39U1"/>
</dbReference>
<dbReference type="NCBIfam" id="TIGR01777">
    <property type="entry name" value="yfcH"/>
    <property type="match status" value="1"/>
</dbReference>
<dbReference type="PANTHER" id="PTHR11092:SF0">
    <property type="entry name" value="EPIMERASE FAMILY PROTEIN SDR39U1"/>
    <property type="match status" value="1"/>
</dbReference>
<dbReference type="PANTHER" id="PTHR11092">
    <property type="entry name" value="SUGAR NUCLEOTIDE EPIMERASE RELATED"/>
    <property type="match status" value="1"/>
</dbReference>
<dbReference type="Pfam" id="PF08338">
    <property type="entry name" value="DUF1731"/>
    <property type="match status" value="1"/>
</dbReference>
<dbReference type="Pfam" id="PF01370">
    <property type="entry name" value="Epimerase"/>
    <property type="match status" value="1"/>
</dbReference>
<dbReference type="SUPFAM" id="SSF51735">
    <property type="entry name" value="NAD(P)-binding Rossmann-fold domains"/>
    <property type="match status" value="1"/>
</dbReference>
<reference key="1">
    <citation type="journal article" date="2005" name="J. Bacteriol.">
        <title>Insights on evolution of virulence and resistance from the complete genome analysis of an early methicillin-resistant Staphylococcus aureus strain and a biofilm-producing methicillin-resistant Staphylococcus epidermidis strain.</title>
        <authorList>
            <person name="Gill S.R."/>
            <person name="Fouts D.E."/>
            <person name="Archer G.L."/>
            <person name="Mongodin E.F."/>
            <person name="DeBoy R.T."/>
            <person name="Ravel J."/>
            <person name="Paulsen I.T."/>
            <person name="Kolonay J.F."/>
            <person name="Brinkac L.M."/>
            <person name="Beanan M.J."/>
            <person name="Dodson R.J."/>
            <person name="Daugherty S.C."/>
            <person name="Madupu R."/>
            <person name="Angiuoli S.V."/>
            <person name="Durkin A.S."/>
            <person name="Haft D.H."/>
            <person name="Vamathevan J.J."/>
            <person name="Khouri H."/>
            <person name="Utterback T.R."/>
            <person name="Lee C."/>
            <person name="Dimitrov G."/>
            <person name="Jiang L."/>
            <person name="Qin H."/>
            <person name="Weidman J."/>
            <person name="Tran K."/>
            <person name="Kang K.H."/>
            <person name="Hance I.R."/>
            <person name="Nelson K.E."/>
            <person name="Fraser C.M."/>
        </authorList>
    </citation>
    <scope>NUCLEOTIDE SEQUENCE [LARGE SCALE GENOMIC DNA]</scope>
    <source>
        <strain>ATCC 35984 / DSM 28319 / BCRC 17069 / CCUG 31568 / BM 3577 / RP62A</strain>
    </source>
</reference>